<feature type="initiator methionine" description="Removed" evidence="5">
    <location>
        <position position="1"/>
    </location>
</feature>
<feature type="chain" id="PRO_0000449844" description="Oleosin Ara h 14.0102">
    <location>
        <begin position="2"/>
        <end position="176"/>
    </location>
</feature>
<feature type="transmembrane region" description="Helical" evidence="1">
    <location>
        <begin position="61"/>
        <end position="81"/>
    </location>
</feature>
<feature type="transmembrane region" description="Helical" evidence="1">
    <location>
        <begin position="87"/>
        <end position="107"/>
    </location>
</feature>
<feature type="region of interest" description="Disordered" evidence="2">
    <location>
        <begin position="156"/>
        <end position="176"/>
    </location>
</feature>
<feature type="modified residue" description="N-acetylalanine; alternate" evidence="5">
    <location>
        <position position="2"/>
    </location>
</feature>
<feature type="sequence conflict" description="In Ref. 1; AAK13450." evidence="8" ref="1">
    <original>M</original>
    <variation>V</variation>
    <location>
        <position position="149"/>
    </location>
</feature>
<name>OL142_ARAHY</name>
<comment type="function">
    <text evidence="8">May have a structural role to stabilize the lipid body during desiccation of the seed by preventing coalescence of the oil. Probably interacts with both lipid and phospholipid moieties of lipid bodies. May also provide recognition signals for specific lipase anchorage in lipolysis during seedling growth.</text>
</comment>
<comment type="subunit">
    <text evidence="3 4">Homodimer. Forms oligomers.</text>
</comment>
<comment type="subcellular location">
    <subcellularLocation>
        <location evidence="3 4 5">Lipid droplet</location>
    </subcellularLocation>
    <subcellularLocation>
        <location evidence="1 3">Membrane</location>
        <topology evidence="1">Multi-pass membrane protein</topology>
    </subcellularLocation>
    <text evidence="8">Surface of oil bodies. Oleosins exist at a monolayer lipid/water interface.</text>
</comment>
<comment type="tissue specificity">
    <text evidence="3 4 5">Expressed in seeds (at protein level) (PubMed:12144563, PubMed:16095908, PubMed:25860789). Not expressed in leaves (PubMed:16095908).</text>
</comment>
<comment type="developmental stage">
    <text evidence="4">Expressed in immature (78 days post-seedling) and mature seeds.</text>
</comment>
<comment type="allergen">
    <text evidence="3 5">Causes an allergic reaction in human (PubMed:12144563, PubMed:25860789). Pooled with Ara h 15 binds to IgE in 75% of the 4 peanut-allergic patients tested (PubMed:25860789). Binds to IgE in 36% of the 14 peanut allergic-patients tested. IgE-binding is increased in roasted peanuts compared to fresh peanuts (PubMed:12144563).</text>
</comment>
<comment type="similarity">
    <text evidence="8">Belongs to the oleosin family.</text>
</comment>
<protein>
    <recommendedName>
        <fullName evidence="8">Oleosin Ara h 14.0102</fullName>
    </recommendedName>
    <alternativeName>
        <fullName evidence="7">Oleosin 5 variant B</fullName>
    </alternativeName>
    <allergenName evidence="8">Ara h 14.0102</allergenName>
</protein>
<evidence type="ECO:0000255" key="1"/>
<evidence type="ECO:0000256" key="2">
    <source>
        <dbReference type="SAM" id="MobiDB-lite"/>
    </source>
</evidence>
<evidence type="ECO:0000269" key="3">
    <source>
    </source>
</evidence>
<evidence type="ECO:0000269" key="4">
    <source>
    </source>
</evidence>
<evidence type="ECO:0000269" key="5">
    <source>
    </source>
</evidence>
<evidence type="ECO:0000303" key="6">
    <source>
    </source>
</evidence>
<evidence type="ECO:0000303" key="7">
    <source>
    </source>
</evidence>
<evidence type="ECO:0000305" key="8"/>
<evidence type="ECO:0000312" key="9">
    <source>
        <dbReference type="EMBL" id="AAK13450.1"/>
    </source>
</evidence>
<proteinExistence type="evidence at protein level"/>
<organism evidence="9">
    <name type="scientific">Arachis hypogaea</name>
    <name type="common">Peanut</name>
    <dbReference type="NCBI Taxonomy" id="3818"/>
    <lineage>
        <taxon>Eukaryota</taxon>
        <taxon>Viridiplantae</taxon>
        <taxon>Streptophyta</taxon>
        <taxon>Embryophyta</taxon>
        <taxon>Tracheophyta</taxon>
        <taxon>Spermatophyta</taxon>
        <taxon>Magnoliopsida</taxon>
        <taxon>eudicotyledons</taxon>
        <taxon>Gunneridae</taxon>
        <taxon>Pentapetalae</taxon>
        <taxon>rosids</taxon>
        <taxon>fabids</taxon>
        <taxon>Fabales</taxon>
        <taxon>Fabaceae</taxon>
        <taxon>Papilionoideae</taxon>
        <taxon>50 kb inversion clade</taxon>
        <taxon>dalbergioids sensu lato</taxon>
        <taxon>Dalbergieae</taxon>
        <taxon>Pterocarpus clade</taxon>
        <taxon>Arachis</taxon>
    </lineage>
</organism>
<dbReference type="EMBL" id="AF325918">
    <property type="protein sequence ID" value="AAK13450.1"/>
    <property type="molecule type" value="mRNA"/>
</dbReference>
<dbReference type="SMR" id="Q9AXI0"/>
<dbReference type="Allergome" id="11753">
    <property type="allergen name" value="Ara h 14"/>
</dbReference>
<dbReference type="Allergome" id="11755">
    <property type="allergen name" value="Ara h 14.0102"/>
</dbReference>
<dbReference type="iPTMnet" id="Q9AXI0"/>
<dbReference type="GO" id="GO:0016020">
    <property type="term" value="C:membrane"/>
    <property type="evidence" value="ECO:0007669"/>
    <property type="project" value="UniProtKB-SubCell"/>
</dbReference>
<dbReference type="GO" id="GO:0012511">
    <property type="term" value="C:monolayer-surrounded lipid storage body"/>
    <property type="evidence" value="ECO:0007669"/>
    <property type="project" value="InterPro"/>
</dbReference>
<dbReference type="GO" id="GO:0019915">
    <property type="term" value="P:lipid storage"/>
    <property type="evidence" value="ECO:0007669"/>
    <property type="project" value="TreeGrafter"/>
</dbReference>
<dbReference type="GO" id="GO:0050826">
    <property type="term" value="P:response to freezing"/>
    <property type="evidence" value="ECO:0007669"/>
    <property type="project" value="TreeGrafter"/>
</dbReference>
<dbReference type="GO" id="GO:0010344">
    <property type="term" value="P:seed oilbody biogenesis"/>
    <property type="evidence" value="ECO:0007669"/>
    <property type="project" value="TreeGrafter"/>
</dbReference>
<dbReference type="InterPro" id="IPR000136">
    <property type="entry name" value="Oleosin"/>
</dbReference>
<dbReference type="PANTHER" id="PTHR33203">
    <property type="entry name" value="OLEOSIN"/>
    <property type="match status" value="1"/>
</dbReference>
<dbReference type="PANTHER" id="PTHR33203:SF63">
    <property type="entry name" value="OLEOSIN 18.2 KDA"/>
    <property type="match status" value="1"/>
</dbReference>
<dbReference type="Pfam" id="PF01277">
    <property type="entry name" value="Oleosin"/>
    <property type="match status" value="1"/>
</dbReference>
<keyword id="KW-0007">Acetylation</keyword>
<keyword id="KW-0020">Allergen</keyword>
<keyword id="KW-0903">Direct protein sequencing</keyword>
<keyword id="KW-0551">Lipid droplet</keyword>
<keyword id="KW-0472">Membrane</keyword>
<keyword id="KW-0812">Transmembrane</keyword>
<keyword id="KW-1133">Transmembrane helix</keyword>
<sequence length="176" mass="18457">MATATDRAPHQVQVHTPTTQRVDVQRRGYDVSGGGVKTFLPDRGPSTSQIIAVLVGVPTGGTLLLLSGLSLLGTIIGLAIATPVFTFFSPVIVPAVVTIGLAVIGILTAGACGLTGLMSLSWMINFIRQVHGTTVPDQLDSAKRRMADMADYVGQKTKDAGQEIQTKAQDVKRSSS</sequence>
<accession>Q9AXI0</accession>
<reference evidence="9" key="1">
    <citation type="journal article" date="2005" name="Plant Physiol. Biochem.">
        <title>Purification and cloning of two high molecular mass isoforms of peanut seed oleosin encoded by cDNAs of equal sizes.</title>
        <authorList>
            <person name="Pons L."/>
            <person name="Chery C."/>
            <person name="Mrabet N."/>
            <person name="Schohn H."/>
            <person name="Lapicque F."/>
            <person name="Gueant J.L."/>
        </authorList>
    </citation>
    <scope>NUCLEOTIDE SEQUENCE [MRNA]</scope>
    <scope>PROTEIN SEQUENCE OF 147-156</scope>
    <scope>SUBUNIT</scope>
    <scope>SUBCELLULAR LOCATION</scope>
    <scope>TISSUE SPECIFICITY</scope>
    <scope>DEVELOPMENTAL STAGE</scope>
    <scope>CIRCULAR DICHROISM ANALYSIS</scope>
    <source>
        <strain evidence="6">cv. Valencia</strain>
        <tissue evidence="6">Seed</tissue>
    </source>
</reference>
<reference key="2">
    <citation type="journal article" date="2015" name="PLoS ONE">
        <title>Development of a novel strategy to isolate lipophilic allergens (oleosins) from peanuts.</title>
        <authorList>
            <person name="Schwager C."/>
            <person name="Kull S."/>
            <person name="Krause S."/>
            <person name="Schocker F."/>
            <person name="Petersen A."/>
            <person name="Becker W.M."/>
            <person name="Jappe U."/>
        </authorList>
    </citation>
    <scope>PROTEIN SEQUENCE OF 2-21; 27-43; 129-143 AND 146-156</scope>
    <scope>SUBCELLULAR LOCATION</scope>
    <scope>TISSUE SPECIFICITY</scope>
    <scope>IDENTIFICATION BY MASS SPECTROMETRY</scope>
    <scope>ACETYLATION AT ALA-2</scope>
    <scope>ALLERGEN</scope>
    <source>
        <tissue evidence="7">Seed</tissue>
    </source>
</reference>
<reference key="3">
    <citation type="journal article" date="2002" name="Allergy">
        <title>The 18 kDa peanut oleosin is a candidate allergen for IgE-mediated reactions to peanuts.</title>
        <authorList>
            <person name="Pons L."/>
            <person name="Chery C."/>
            <person name="Romano A."/>
            <person name="Namour F."/>
            <person name="Artesani M.C."/>
            <person name="Gueant J.L."/>
        </authorList>
    </citation>
    <scope>SUBUNIT</scope>
    <scope>SUBCELLULAR LOCATION</scope>
    <scope>TISSUE SPECIFICITY</scope>
    <scope>ALLERGEN</scope>
</reference>